<comment type="function">
    <text evidence="1">Transfers an acetyl group from acetyl-CoA to L-homoserine, forming acetyl-L-homoserine.</text>
</comment>
<comment type="catalytic activity">
    <reaction evidence="1">
        <text>L-homoserine + acetyl-CoA = O-acetyl-L-homoserine + CoA</text>
        <dbReference type="Rhea" id="RHEA:13701"/>
        <dbReference type="ChEBI" id="CHEBI:57287"/>
        <dbReference type="ChEBI" id="CHEBI:57288"/>
        <dbReference type="ChEBI" id="CHEBI:57476"/>
        <dbReference type="ChEBI" id="CHEBI:57716"/>
        <dbReference type="EC" id="2.3.1.31"/>
    </reaction>
</comment>
<comment type="pathway">
    <text evidence="1">Amino-acid biosynthesis; L-methionine biosynthesis via de novo pathway; O-acetyl-L-homoserine from L-homoserine: step 1/1.</text>
</comment>
<comment type="subunit">
    <text evidence="1">Homodimer.</text>
</comment>
<comment type="subcellular location">
    <subcellularLocation>
        <location evidence="1">Cytoplasm</location>
    </subcellularLocation>
</comment>
<comment type="similarity">
    <text evidence="1">Belongs to the AB hydrolase superfamily. MetX family.</text>
</comment>
<dbReference type="EC" id="2.3.1.31" evidence="1"/>
<dbReference type="EMBL" id="CP000009">
    <property type="protein sequence ID" value="AAW59992.1"/>
    <property type="molecule type" value="Genomic_DNA"/>
</dbReference>
<dbReference type="RefSeq" id="WP_011251795.1">
    <property type="nucleotide sequence ID" value="NC_006677.1"/>
</dbReference>
<dbReference type="SMR" id="Q5FUF4"/>
<dbReference type="STRING" id="290633.GOX0203"/>
<dbReference type="ESTHER" id="gluox-metx">
    <property type="family name" value="Homoserine_transacetylase"/>
</dbReference>
<dbReference type="KEGG" id="gox:GOX0203"/>
<dbReference type="eggNOG" id="COG2021">
    <property type="taxonomic scope" value="Bacteria"/>
</dbReference>
<dbReference type="HOGENOM" id="CLU_028760_1_2_5"/>
<dbReference type="UniPathway" id="UPA00051">
    <property type="reaction ID" value="UER00074"/>
</dbReference>
<dbReference type="Proteomes" id="UP000006375">
    <property type="component" value="Chromosome"/>
</dbReference>
<dbReference type="GO" id="GO:0005737">
    <property type="term" value="C:cytoplasm"/>
    <property type="evidence" value="ECO:0007669"/>
    <property type="project" value="UniProtKB-SubCell"/>
</dbReference>
<dbReference type="GO" id="GO:0004414">
    <property type="term" value="F:homoserine O-acetyltransferase activity"/>
    <property type="evidence" value="ECO:0007669"/>
    <property type="project" value="UniProtKB-UniRule"/>
</dbReference>
<dbReference type="GO" id="GO:0009092">
    <property type="term" value="P:homoserine metabolic process"/>
    <property type="evidence" value="ECO:0007669"/>
    <property type="project" value="TreeGrafter"/>
</dbReference>
<dbReference type="GO" id="GO:0009086">
    <property type="term" value="P:methionine biosynthetic process"/>
    <property type="evidence" value="ECO:0007669"/>
    <property type="project" value="UniProtKB-UniRule"/>
</dbReference>
<dbReference type="FunFam" id="1.10.1740.110:FF:000001">
    <property type="entry name" value="Homoserine O-acetyltransferase"/>
    <property type="match status" value="1"/>
</dbReference>
<dbReference type="Gene3D" id="1.10.1740.110">
    <property type="match status" value="1"/>
</dbReference>
<dbReference type="Gene3D" id="3.40.50.1820">
    <property type="entry name" value="alpha/beta hydrolase"/>
    <property type="match status" value="1"/>
</dbReference>
<dbReference type="HAMAP" id="MF_00296">
    <property type="entry name" value="MetX_acyltransf"/>
    <property type="match status" value="1"/>
</dbReference>
<dbReference type="InterPro" id="IPR000073">
    <property type="entry name" value="AB_hydrolase_1"/>
</dbReference>
<dbReference type="InterPro" id="IPR029058">
    <property type="entry name" value="AB_hydrolase_fold"/>
</dbReference>
<dbReference type="InterPro" id="IPR008220">
    <property type="entry name" value="HAT_MetX-like"/>
</dbReference>
<dbReference type="NCBIfam" id="TIGR01392">
    <property type="entry name" value="homoserO_Ac_trn"/>
    <property type="match status" value="1"/>
</dbReference>
<dbReference type="NCBIfam" id="NF001209">
    <property type="entry name" value="PRK00175.1"/>
    <property type="match status" value="1"/>
</dbReference>
<dbReference type="PANTHER" id="PTHR32268">
    <property type="entry name" value="HOMOSERINE O-ACETYLTRANSFERASE"/>
    <property type="match status" value="1"/>
</dbReference>
<dbReference type="PANTHER" id="PTHR32268:SF11">
    <property type="entry name" value="HOMOSERINE O-ACETYLTRANSFERASE"/>
    <property type="match status" value="1"/>
</dbReference>
<dbReference type="Pfam" id="PF00561">
    <property type="entry name" value="Abhydrolase_1"/>
    <property type="match status" value="1"/>
</dbReference>
<dbReference type="PIRSF" id="PIRSF000443">
    <property type="entry name" value="Homoser_Ac_trans"/>
    <property type="match status" value="1"/>
</dbReference>
<dbReference type="SUPFAM" id="SSF53474">
    <property type="entry name" value="alpha/beta-Hydrolases"/>
    <property type="match status" value="1"/>
</dbReference>
<feature type="chain" id="PRO_0000231871" description="Homoserine O-acetyltransferase">
    <location>
        <begin position="1"/>
        <end position="396"/>
    </location>
</feature>
<feature type="domain" description="AB hydrolase-1" evidence="1">
    <location>
        <begin position="53"/>
        <end position="370"/>
    </location>
</feature>
<feature type="active site" description="Nucleophile" evidence="1">
    <location>
        <position position="158"/>
    </location>
</feature>
<feature type="active site" evidence="1">
    <location>
        <position position="331"/>
    </location>
</feature>
<feature type="active site" evidence="1">
    <location>
        <position position="364"/>
    </location>
</feature>
<feature type="binding site" evidence="1">
    <location>
        <position position="228"/>
    </location>
    <ligand>
        <name>substrate</name>
    </ligand>
</feature>
<feature type="binding site" evidence="1">
    <location>
        <position position="365"/>
    </location>
    <ligand>
        <name>substrate</name>
    </ligand>
</feature>
<proteinExistence type="inferred from homology"/>
<organism>
    <name type="scientific">Gluconobacter oxydans (strain 621H)</name>
    <name type="common">Gluconobacter suboxydans</name>
    <dbReference type="NCBI Taxonomy" id="290633"/>
    <lineage>
        <taxon>Bacteria</taxon>
        <taxon>Pseudomonadati</taxon>
        <taxon>Pseudomonadota</taxon>
        <taxon>Alphaproteobacteria</taxon>
        <taxon>Acetobacterales</taxon>
        <taxon>Acetobacteraceae</taxon>
        <taxon>Gluconobacter</taxon>
    </lineage>
</organism>
<evidence type="ECO:0000255" key="1">
    <source>
        <dbReference type="HAMAP-Rule" id="MF_00296"/>
    </source>
</evidence>
<name>METXA_GLUOX</name>
<accession>Q5FUF4</accession>
<gene>
    <name evidence="1" type="primary">metXA</name>
    <name type="ordered locus">GOX0203</name>
</gene>
<sequence length="396" mass="43314">MDISASPSIADGPVYTHQTVRLDSGLDLECGVHLAPLEVAYCTYGTLSPARDNAILVCHALTGDQYLAERNPLTGKPGWWSRMVGPGLPIDTDRYFVVCSNVLGGCMGTTGPRSICAETGKAWDSEFPPITMHDIVAAQAKLIDHLGIDRLFAVIGGSMGGMQALTWAADFPDRVFAAMPIATSPFHSAQNIAFNEVSRQAIFADPDWHDGHYRDFGAIPARGLGVARMMAHITYLSEEALSRKFGRRVRHDAATAVPASSSPSLFGEMFEVESYLRHQGSSFVRRFDANSYLTITRAMDYFDLAAEHDGDLANPFRKSQTRFCVVSFSSDWLFPTSQSRLLVRALNRAGANVSFVEIESDRGHDAFLLEEPDFDRTIRGFIAGAAEHAALKAGER</sequence>
<protein>
    <recommendedName>
        <fullName evidence="1">Homoserine O-acetyltransferase</fullName>
        <shortName evidence="1">HAT</shortName>
        <ecNumber evidence="1">2.3.1.31</ecNumber>
    </recommendedName>
    <alternativeName>
        <fullName evidence="1">Homoserine transacetylase</fullName>
        <shortName evidence="1">HTA</shortName>
    </alternativeName>
</protein>
<keyword id="KW-0012">Acyltransferase</keyword>
<keyword id="KW-0028">Amino-acid biosynthesis</keyword>
<keyword id="KW-0963">Cytoplasm</keyword>
<keyword id="KW-0486">Methionine biosynthesis</keyword>
<keyword id="KW-1185">Reference proteome</keyword>
<keyword id="KW-0808">Transferase</keyword>
<reference key="1">
    <citation type="journal article" date="2005" name="Nat. Biotechnol.">
        <title>Complete genome sequence of the acetic acid bacterium Gluconobacter oxydans.</title>
        <authorList>
            <person name="Prust C."/>
            <person name="Hoffmeister M."/>
            <person name="Liesegang H."/>
            <person name="Wiezer A."/>
            <person name="Fricke W.F."/>
            <person name="Ehrenreich A."/>
            <person name="Gottschalk G."/>
            <person name="Deppenmeier U."/>
        </authorList>
    </citation>
    <scope>NUCLEOTIDE SEQUENCE [LARGE SCALE GENOMIC DNA]</scope>
    <source>
        <strain>621H</strain>
    </source>
</reference>